<keyword id="KW-0067">ATP-binding</keyword>
<keyword id="KW-0173">Coenzyme A biosynthesis</keyword>
<keyword id="KW-0963">Cytoplasm</keyword>
<keyword id="KW-0418">Kinase</keyword>
<keyword id="KW-0547">Nucleotide-binding</keyword>
<keyword id="KW-0808">Transferase</keyword>
<protein>
    <recommendedName>
        <fullName evidence="1">Pantothenate kinase</fullName>
        <ecNumber evidence="1">2.7.1.33</ecNumber>
    </recommendedName>
    <alternativeName>
        <fullName evidence="1">Pantothenic acid kinase</fullName>
    </alternativeName>
</protein>
<gene>
    <name evidence="1" type="primary">coaA</name>
    <name type="ordered locus">SNSL254_A4472</name>
</gene>
<proteinExistence type="inferred from homology"/>
<evidence type="ECO:0000255" key="1">
    <source>
        <dbReference type="HAMAP-Rule" id="MF_00215"/>
    </source>
</evidence>
<organism>
    <name type="scientific">Salmonella newport (strain SL254)</name>
    <dbReference type="NCBI Taxonomy" id="423368"/>
    <lineage>
        <taxon>Bacteria</taxon>
        <taxon>Pseudomonadati</taxon>
        <taxon>Pseudomonadota</taxon>
        <taxon>Gammaproteobacteria</taxon>
        <taxon>Enterobacterales</taxon>
        <taxon>Enterobacteriaceae</taxon>
        <taxon>Salmonella</taxon>
    </lineage>
</organism>
<comment type="catalytic activity">
    <reaction evidence="1">
        <text>(R)-pantothenate + ATP = (R)-4'-phosphopantothenate + ADP + H(+)</text>
        <dbReference type="Rhea" id="RHEA:16373"/>
        <dbReference type="ChEBI" id="CHEBI:10986"/>
        <dbReference type="ChEBI" id="CHEBI:15378"/>
        <dbReference type="ChEBI" id="CHEBI:29032"/>
        <dbReference type="ChEBI" id="CHEBI:30616"/>
        <dbReference type="ChEBI" id="CHEBI:456216"/>
        <dbReference type="EC" id="2.7.1.33"/>
    </reaction>
</comment>
<comment type="pathway">
    <text evidence="1">Cofactor biosynthesis; coenzyme A biosynthesis; CoA from (R)-pantothenate: step 1/5.</text>
</comment>
<comment type="subcellular location">
    <subcellularLocation>
        <location evidence="1">Cytoplasm</location>
    </subcellularLocation>
</comment>
<comment type="similarity">
    <text evidence="1">Belongs to the prokaryotic pantothenate kinase family.</text>
</comment>
<feature type="chain" id="PRO_1000099948" description="Pantothenate kinase">
    <location>
        <begin position="1"/>
        <end position="316"/>
    </location>
</feature>
<feature type="binding site" evidence="1">
    <location>
        <begin position="95"/>
        <end position="102"/>
    </location>
    <ligand>
        <name>ATP</name>
        <dbReference type="ChEBI" id="CHEBI:30616"/>
    </ligand>
</feature>
<reference key="1">
    <citation type="journal article" date="2011" name="J. Bacteriol.">
        <title>Comparative genomics of 28 Salmonella enterica isolates: evidence for CRISPR-mediated adaptive sublineage evolution.</title>
        <authorList>
            <person name="Fricke W.F."/>
            <person name="Mammel M.K."/>
            <person name="McDermott P.F."/>
            <person name="Tartera C."/>
            <person name="White D.G."/>
            <person name="Leclerc J.E."/>
            <person name="Ravel J."/>
            <person name="Cebula T.A."/>
        </authorList>
    </citation>
    <scope>NUCLEOTIDE SEQUENCE [LARGE SCALE GENOMIC DNA]</scope>
    <source>
        <strain>SL254</strain>
    </source>
</reference>
<name>COAA_SALNS</name>
<accession>B4T0Y0</accession>
<dbReference type="EC" id="2.7.1.33" evidence="1"/>
<dbReference type="EMBL" id="CP001113">
    <property type="protein sequence ID" value="ACF65384.1"/>
    <property type="molecule type" value="Genomic_DNA"/>
</dbReference>
<dbReference type="RefSeq" id="WP_000023068.1">
    <property type="nucleotide sequence ID" value="NZ_CCMR01000001.1"/>
</dbReference>
<dbReference type="SMR" id="B4T0Y0"/>
<dbReference type="KEGG" id="see:SNSL254_A4472"/>
<dbReference type="HOGENOM" id="CLU_053818_1_1_6"/>
<dbReference type="UniPathway" id="UPA00241">
    <property type="reaction ID" value="UER00352"/>
</dbReference>
<dbReference type="Proteomes" id="UP000008824">
    <property type="component" value="Chromosome"/>
</dbReference>
<dbReference type="GO" id="GO:0005737">
    <property type="term" value="C:cytoplasm"/>
    <property type="evidence" value="ECO:0007669"/>
    <property type="project" value="UniProtKB-SubCell"/>
</dbReference>
<dbReference type="GO" id="GO:0005524">
    <property type="term" value="F:ATP binding"/>
    <property type="evidence" value="ECO:0007669"/>
    <property type="project" value="UniProtKB-UniRule"/>
</dbReference>
<dbReference type="GO" id="GO:0004594">
    <property type="term" value="F:pantothenate kinase activity"/>
    <property type="evidence" value="ECO:0007669"/>
    <property type="project" value="UniProtKB-UniRule"/>
</dbReference>
<dbReference type="GO" id="GO:0015937">
    <property type="term" value="P:coenzyme A biosynthetic process"/>
    <property type="evidence" value="ECO:0007669"/>
    <property type="project" value="UniProtKB-UniRule"/>
</dbReference>
<dbReference type="CDD" id="cd02025">
    <property type="entry name" value="PanK"/>
    <property type="match status" value="1"/>
</dbReference>
<dbReference type="FunFam" id="3.40.50.300:FF:000242">
    <property type="entry name" value="Pantothenate kinase"/>
    <property type="match status" value="1"/>
</dbReference>
<dbReference type="Gene3D" id="3.40.50.300">
    <property type="entry name" value="P-loop containing nucleotide triphosphate hydrolases"/>
    <property type="match status" value="1"/>
</dbReference>
<dbReference type="HAMAP" id="MF_00215">
    <property type="entry name" value="Pantothen_kinase_1"/>
    <property type="match status" value="1"/>
</dbReference>
<dbReference type="InterPro" id="IPR027417">
    <property type="entry name" value="P-loop_NTPase"/>
</dbReference>
<dbReference type="InterPro" id="IPR004566">
    <property type="entry name" value="PanK"/>
</dbReference>
<dbReference type="InterPro" id="IPR006083">
    <property type="entry name" value="PRK/URK"/>
</dbReference>
<dbReference type="NCBIfam" id="TIGR00554">
    <property type="entry name" value="panK_bact"/>
    <property type="match status" value="1"/>
</dbReference>
<dbReference type="PANTHER" id="PTHR10285">
    <property type="entry name" value="URIDINE KINASE"/>
    <property type="match status" value="1"/>
</dbReference>
<dbReference type="Pfam" id="PF00485">
    <property type="entry name" value="PRK"/>
    <property type="match status" value="1"/>
</dbReference>
<dbReference type="PIRSF" id="PIRSF000545">
    <property type="entry name" value="Pantothenate_kin"/>
    <property type="match status" value="1"/>
</dbReference>
<dbReference type="SUPFAM" id="SSF52540">
    <property type="entry name" value="P-loop containing nucleoside triphosphate hydrolases"/>
    <property type="match status" value="1"/>
</dbReference>
<sequence>MSIKEQSLMTPYLQFDRSQWAALRDSVPMTLTEDEIAQLKGINEDLSLEEVAEIYLPLSRLLNFYISSNLRRQAVLEQFLGTNGQRIPYIISIAGSVAVGKSTTARVLQALLSRWPEHRRVELITTDGFLHPNQVLKERGLMKKKGFPESYDMHRLVKFVSDLKSGVPNVTAPVYSHLIYDVIPEGDKTVAQPDILILEGLNVLQSGMDYPHDPHHVFVSDFVDFSIYVDAPEELLQTWYINRFLKFREGAFTDPDSYFHNYAKLSKEEAVNTAASLWKEINWLNLKQNILPTRERASLIMTKSANHAVEQVRLRK</sequence>